<protein>
    <recommendedName>
        <fullName evidence="1">Potassium/proton antiporter CemA</fullName>
    </recommendedName>
    <alternativeName>
        <fullName evidence="1">Chloroplast envelope membrane protein A</fullName>
        <shortName evidence="1">CemA</shortName>
    </alternativeName>
</protein>
<comment type="function">
    <text evidence="1">Contributes to K(+)/H(+) antiport activity by supporting proton efflux to control proton extrusion and homeostasis in chloroplasts in a light-dependent manner to modulate photosynthesis. Prevents excessive induction of non-photochemical quenching (NPQ) under continuous-light conditions. Indirectly promotes efficient inorganic carbon uptake into chloroplasts.</text>
</comment>
<comment type="catalytic activity">
    <reaction evidence="1">
        <text>K(+)(in) + H(+)(out) = K(+)(out) + H(+)(in)</text>
        <dbReference type="Rhea" id="RHEA:29467"/>
        <dbReference type="ChEBI" id="CHEBI:15378"/>
        <dbReference type="ChEBI" id="CHEBI:29103"/>
    </reaction>
</comment>
<comment type="subcellular location">
    <subcellularLocation>
        <location evidence="1">Plastid</location>
        <location evidence="1">Chloroplast inner membrane</location>
        <topology evidence="1">Multi-pass membrane protein</topology>
    </subcellularLocation>
</comment>
<comment type="similarity">
    <text evidence="1 2">Belongs to the CemA family.</text>
</comment>
<name>CEMA_ACOCI</name>
<geneLocation type="chloroplast"/>
<reference key="1">
    <citation type="submission" date="2007-11" db="EMBL/GenBank/DDBJ databases">
        <title>The complete chloroplast genome of Acorus americanus.</title>
        <authorList>
            <person name="Peery R.M."/>
            <person name="Chumley T.W."/>
            <person name="Kuehl J.V."/>
            <person name="Boore J.L."/>
            <person name="Raubeson L.A."/>
        </authorList>
    </citation>
    <scope>NUCLEOTIDE SEQUENCE [LARGE SCALE GENOMIC DNA]</scope>
</reference>
<accession>A9LYB2</accession>
<sequence length="229" mass="26920">MPKKKGFTPLPYLASIVFLPWWVSLSFNKSLEPWVTNWWNTRQSETFLNDIQERNVLERFIELEELFLLDEMLKENPETRMKNLRIGIHNETIQLVKTDNEYHLHTILHFSTNIICFAILSVYSILGNEELVILNSWVQEFLYNLSDTIKAFSILLVTDLWIGFHSPHGWELMIGSVYNDFGLAHNEQIISGLVSTFPVILDTIVKYWIFHYLNRVSPSLVVIYHSMND</sequence>
<evidence type="ECO:0000255" key="1">
    <source>
        <dbReference type="HAMAP-Rule" id="MF_01308"/>
    </source>
</evidence>
<evidence type="ECO:0000305" key="2"/>
<gene>
    <name evidence="1" type="primary">cemA</name>
</gene>
<dbReference type="EMBL" id="EU273602">
    <property type="protein sequence ID" value="ABX38755.1"/>
    <property type="molecule type" value="Genomic_DNA"/>
</dbReference>
<dbReference type="RefSeq" id="YP_001586193.1">
    <property type="nucleotide sequence ID" value="NC_010093.1"/>
</dbReference>
<dbReference type="SMR" id="A9LYB2"/>
<dbReference type="GeneID" id="5777728"/>
<dbReference type="GO" id="GO:0009706">
    <property type="term" value="C:chloroplast inner membrane"/>
    <property type="evidence" value="ECO:0007669"/>
    <property type="project" value="UniProtKB-SubCell"/>
</dbReference>
<dbReference type="GO" id="GO:0015297">
    <property type="term" value="F:antiporter activity"/>
    <property type="evidence" value="ECO:0007669"/>
    <property type="project" value="UniProtKB-KW"/>
</dbReference>
<dbReference type="GO" id="GO:0015078">
    <property type="term" value="F:proton transmembrane transporter activity"/>
    <property type="evidence" value="ECO:0007669"/>
    <property type="project" value="UniProtKB-UniRule"/>
</dbReference>
<dbReference type="GO" id="GO:0006813">
    <property type="term" value="P:potassium ion transport"/>
    <property type="evidence" value="ECO:0007669"/>
    <property type="project" value="UniProtKB-UniRule"/>
</dbReference>
<dbReference type="HAMAP" id="MF_01308">
    <property type="entry name" value="CemA_PxcA"/>
    <property type="match status" value="1"/>
</dbReference>
<dbReference type="InterPro" id="IPR004282">
    <property type="entry name" value="CemA"/>
</dbReference>
<dbReference type="PANTHER" id="PTHR33650:SF2">
    <property type="entry name" value="CHLOROPLAST ENVELOPE MEMBRANE PROTEIN"/>
    <property type="match status" value="1"/>
</dbReference>
<dbReference type="PANTHER" id="PTHR33650">
    <property type="entry name" value="CHLOROPLAST ENVELOPE MEMBRANE PROTEIN-RELATED"/>
    <property type="match status" value="1"/>
</dbReference>
<dbReference type="Pfam" id="PF03040">
    <property type="entry name" value="CemA"/>
    <property type="match status" value="1"/>
</dbReference>
<feature type="chain" id="PRO_0000346538" description="Potassium/proton antiporter CemA">
    <location>
        <begin position="1"/>
        <end position="229"/>
    </location>
</feature>
<feature type="transmembrane region" description="Helical" evidence="1">
    <location>
        <begin position="7"/>
        <end position="27"/>
    </location>
</feature>
<feature type="transmembrane region" description="Helical" evidence="1">
    <location>
        <begin position="114"/>
        <end position="134"/>
    </location>
</feature>
<feature type="transmembrane region" description="Helical" evidence="1">
    <location>
        <begin position="154"/>
        <end position="174"/>
    </location>
</feature>
<feature type="transmembrane region" description="Helical" evidence="1">
    <location>
        <begin position="189"/>
        <end position="209"/>
    </location>
</feature>
<proteinExistence type="inferred from homology"/>
<keyword id="KW-0050">Antiport</keyword>
<keyword id="KW-0150">Chloroplast</keyword>
<keyword id="KW-0375">Hydrogen ion transport</keyword>
<keyword id="KW-0406">Ion transport</keyword>
<keyword id="KW-0472">Membrane</keyword>
<keyword id="KW-0934">Plastid</keyword>
<keyword id="KW-1001">Plastid inner membrane</keyword>
<keyword id="KW-0630">Potassium</keyword>
<keyword id="KW-0633">Potassium transport</keyword>
<keyword id="KW-0812">Transmembrane</keyword>
<keyword id="KW-1133">Transmembrane helix</keyword>
<keyword id="KW-0813">Transport</keyword>
<organism>
    <name type="scientific">Acorus calamus var. americanus</name>
    <name type="common">American sweet flag</name>
    <name type="synonym">Acorus americanus</name>
    <dbReference type="NCBI Taxonomy" id="263995"/>
    <lineage>
        <taxon>Eukaryota</taxon>
        <taxon>Viridiplantae</taxon>
        <taxon>Streptophyta</taxon>
        <taxon>Embryophyta</taxon>
        <taxon>Tracheophyta</taxon>
        <taxon>Spermatophyta</taxon>
        <taxon>Magnoliopsida</taxon>
        <taxon>Liliopsida</taxon>
        <taxon>Acoraceae</taxon>
        <taxon>Acorus</taxon>
    </lineage>
</organism>